<keyword id="KW-0222">Digestion</keyword>
<keyword id="KW-0903">Direct protein sequencing</keyword>
<keyword id="KW-1015">Disulfide bond</keyword>
<keyword id="KW-0378">Hydrolase</keyword>
<keyword id="KW-0645">Protease</keyword>
<keyword id="KW-1185">Reference proteome</keyword>
<keyword id="KW-0964">Secreted</keyword>
<keyword id="KW-0720">Serine protease</keyword>
<keyword id="KW-0732">Signal</keyword>
<keyword id="KW-0865">Zymogen</keyword>
<dbReference type="EC" id="3.4.21.1"/>
<dbReference type="EMBL" id="Z18887">
    <property type="protein sequence ID" value="CAA79325.1"/>
    <property type="molecule type" value="mRNA"/>
</dbReference>
<dbReference type="EMBL" id="Z32645">
    <property type="protein sequence ID" value="CAA83568.1"/>
    <property type="molecule type" value="Genomic_DNA"/>
</dbReference>
<dbReference type="EMBL" id="AAAB01008807">
    <property type="protein sequence ID" value="EAA45497.2"/>
    <property type="molecule type" value="Genomic_DNA"/>
</dbReference>
<dbReference type="PIR" id="S49129">
    <property type="entry name" value="S49129"/>
</dbReference>
<dbReference type="RefSeq" id="XP_309033.2">
    <property type="nucleotide sequence ID" value="XM_309033.4"/>
</dbReference>
<dbReference type="SMR" id="Q27289"/>
<dbReference type="FunCoup" id="Q27289">
    <property type="interactions" value="3"/>
</dbReference>
<dbReference type="STRING" id="7165.Q27289"/>
<dbReference type="MEROPS" id="S01.166"/>
<dbReference type="PaxDb" id="7165-AGAP006709-PA"/>
<dbReference type="EnsemblMetazoa" id="AGAP006709-RA">
    <property type="protein sequence ID" value="AGAP006709-PA"/>
    <property type="gene ID" value="AGAP006709"/>
</dbReference>
<dbReference type="VEuPathDB" id="VectorBase:AGAMI1_002294"/>
<dbReference type="VEuPathDB" id="VectorBase:AGAP006709"/>
<dbReference type="eggNOG" id="KOG3627">
    <property type="taxonomic scope" value="Eukaryota"/>
</dbReference>
<dbReference type="HOGENOM" id="CLU_006842_7_4_1"/>
<dbReference type="InParanoid" id="Q27289"/>
<dbReference type="OMA" id="IAHEECR"/>
<dbReference type="PhylomeDB" id="Q27289"/>
<dbReference type="Proteomes" id="UP000007062">
    <property type="component" value="Chromosome 2L"/>
</dbReference>
<dbReference type="GO" id="GO:0005615">
    <property type="term" value="C:extracellular space"/>
    <property type="evidence" value="ECO:0000318"/>
    <property type="project" value="GO_Central"/>
</dbReference>
<dbReference type="GO" id="GO:0004252">
    <property type="term" value="F:serine-type endopeptidase activity"/>
    <property type="evidence" value="ECO:0007669"/>
    <property type="project" value="UniProtKB-EC"/>
</dbReference>
<dbReference type="GO" id="GO:0007586">
    <property type="term" value="P:digestion"/>
    <property type="evidence" value="ECO:0007669"/>
    <property type="project" value="UniProtKB-KW"/>
</dbReference>
<dbReference type="GO" id="GO:0045087">
    <property type="term" value="P:innate immune response"/>
    <property type="evidence" value="ECO:0000318"/>
    <property type="project" value="GO_Central"/>
</dbReference>
<dbReference type="GO" id="GO:0006508">
    <property type="term" value="P:proteolysis"/>
    <property type="evidence" value="ECO:0007669"/>
    <property type="project" value="UniProtKB-KW"/>
</dbReference>
<dbReference type="CDD" id="cd00190">
    <property type="entry name" value="Tryp_SPc"/>
    <property type="match status" value="1"/>
</dbReference>
<dbReference type="FunFam" id="2.40.10.10:FF:000047">
    <property type="entry name" value="Trypsin eta"/>
    <property type="match status" value="1"/>
</dbReference>
<dbReference type="Gene3D" id="2.40.10.10">
    <property type="entry name" value="Trypsin-like serine proteases"/>
    <property type="match status" value="2"/>
</dbReference>
<dbReference type="InterPro" id="IPR050430">
    <property type="entry name" value="Peptidase_S1"/>
</dbReference>
<dbReference type="InterPro" id="IPR009003">
    <property type="entry name" value="Peptidase_S1_PA"/>
</dbReference>
<dbReference type="InterPro" id="IPR043504">
    <property type="entry name" value="Peptidase_S1_PA_chymotrypsin"/>
</dbReference>
<dbReference type="InterPro" id="IPR001314">
    <property type="entry name" value="Peptidase_S1A"/>
</dbReference>
<dbReference type="InterPro" id="IPR001254">
    <property type="entry name" value="Trypsin_dom"/>
</dbReference>
<dbReference type="InterPro" id="IPR018114">
    <property type="entry name" value="TRYPSIN_HIS"/>
</dbReference>
<dbReference type="InterPro" id="IPR033116">
    <property type="entry name" value="TRYPSIN_SER"/>
</dbReference>
<dbReference type="PANTHER" id="PTHR24276:SF98">
    <property type="entry name" value="FI18310P1-RELATED"/>
    <property type="match status" value="1"/>
</dbReference>
<dbReference type="PANTHER" id="PTHR24276">
    <property type="entry name" value="POLYSERASE-RELATED"/>
    <property type="match status" value="1"/>
</dbReference>
<dbReference type="Pfam" id="PF00089">
    <property type="entry name" value="Trypsin"/>
    <property type="match status" value="1"/>
</dbReference>
<dbReference type="PRINTS" id="PR00722">
    <property type="entry name" value="CHYMOTRYPSIN"/>
</dbReference>
<dbReference type="SMART" id="SM00020">
    <property type="entry name" value="Tryp_SPc"/>
    <property type="match status" value="1"/>
</dbReference>
<dbReference type="SUPFAM" id="SSF50494">
    <property type="entry name" value="Trypsin-like serine proteases"/>
    <property type="match status" value="1"/>
</dbReference>
<dbReference type="PROSITE" id="PS50240">
    <property type="entry name" value="TRYPSIN_DOM"/>
    <property type="match status" value="1"/>
</dbReference>
<dbReference type="PROSITE" id="PS00134">
    <property type="entry name" value="TRYPSIN_HIS"/>
    <property type="match status" value="1"/>
</dbReference>
<dbReference type="PROSITE" id="PS00135">
    <property type="entry name" value="TRYPSIN_SER"/>
    <property type="match status" value="1"/>
</dbReference>
<comment type="catalytic activity">
    <reaction evidence="4 5">
        <text>Preferential cleavage: Tyr-|-Xaa, Trp-|-Xaa, Phe-|-Xaa, Leu-|-Xaa.</text>
        <dbReference type="EC" id="3.4.21.1"/>
    </reaction>
</comment>
<comment type="subcellular location">
    <subcellularLocation>
        <location evidence="6">Secreted</location>
    </subcellularLocation>
</comment>
<comment type="tissue specificity">
    <text evidence="6">After blood feeding, expression is induced in the midgut epithelium, followed by secretion into the midgut lumen.</text>
</comment>
<comment type="similarity">
    <text evidence="3">Belongs to the peptidase S1 family.</text>
</comment>
<gene>
    <name type="primary">CHYM1</name>
    <name type="ORF">AGAP006709</name>
</gene>
<protein>
    <recommendedName>
        <fullName>Chymotrypsin-1</fullName>
        <ecNumber>3.4.21.1</ecNumber>
    </recommendedName>
    <alternativeName>
        <fullName>AnChym1</fullName>
    </alternativeName>
</protein>
<sequence>MLRKVFAVVSVLLVVSAAKVTKLVLDDNYVNRVVGGEVAKNGSAPYQVSLQVPGWGHNCGGSLLNDRWVLTAAHCLVGHAPGDLMVLVGTNSLKEGGELLKVDKLLYHSRYNLPRFHNDIGLVRLEQPVRFSELVQSVEYSEKAVPANATVRLTGWGHTSANGPSPTLLQSLNVVTLSNEDCNKKGGDPGYTDVGHLCTLTKTGEGACNGDSGGPLVYEGKLVGVVNFGVPCALGYPDGFARVSYYHDWVRTTMANNSK</sequence>
<name>CTR1_ANOGA</name>
<feature type="signal peptide" evidence="2">
    <location>
        <begin position="1"/>
        <end position="17"/>
    </location>
</feature>
<feature type="propeptide" id="PRO_0000027654" description="Activation peptide" evidence="6">
    <location>
        <begin position="18"/>
        <end position="32"/>
    </location>
</feature>
<feature type="chain" id="PRO_0000027655" description="Chymotrypsin-1">
    <location>
        <begin position="33"/>
        <end position="259"/>
    </location>
</feature>
<feature type="domain" description="Peptidase S1" evidence="3">
    <location>
        <begin position="33"/>
        <end position="255"/>
    </location>
</feature>
<feature type="active site" description="Charge relay system" evidence="1">
    <location>
        <position position="74"/>
    </location>
</feature>
<feature type="active site" description="Charge relay system" evidence="1">
    <location>
        <position position="119"/>
    </location>
</feature>
<feature type="active site" description="Charge relay system" evidence="1">
    <location>
        <position position="212"/>
    </location>
</feature>
<feature type="site" description="Required for specificity" evidence="1">
    <location>
        <position position="206"/>
    </location>
</feature>
<feature type="disulfide bond" evidence="3">
    <location>
        <begin position="59"/>
        <end position="75"/>
    </location>
</feature>
<feature type="disulfide bond" evidence="3">
    <location>
        <begin position="182"/>
        <end position="198"/>
    </location>
</feature>
<feature type="disulfide bond" evidence="3">
    <location>
        <begin position="208"/>
        <end position="232"/>
    </location>
</feature>
<feature type="sequence conflict" description="In Ref. 1; CAA79325/CAA83568." evidence="7" ref="1">
    <original>VSV</original>
    <variation>ASI</variation>
    <location>
        <begin position="9"/>
        <end position="11"/>
    </location>
</feature>
<feature type="sequence conflict" description="In Ref. 1; CAA79325/CAA83568." evidence="7" ref="1">
    <original>T</original>
    <variation>P</variation>
    <location>
        <position position="21"/>
    </location>
</feature>
<feature type="sequence conflict" description="In Ref. 1; CAA79325/CAA83568." evidence="7" ref="1">
    <original>N</original>
    <variation>H</variation>
    <location>
        <position position="28"/>
    </location>
</feature>
<feature type="sequence conflict" description="In Ref. 1; CAA79325/CAA83568." evidence="7" ref="1">
    <original>R</original>
    <variation>Q</variation>
    <location>
        <position position="130"/>
    </location>
</feature>
<feature type="sequence conflict" description="In Ref. 1; CAA79325/CAA83568." evidence="7" ref="1">
    <original>H</original>
    <variation>R</variation>
    <location>
        <position position="158"/>
    </location>
</feature>
<accession>Q27289</accession>
<accession>Q7PF17</accession>
<organism>
    <name type="scientific">Anopheles gambiae</name>
    <name type="common">African malaria mosquito</name>
    <dbReference type="NCBI Taxonomy" id="7165"/>
    <lineage>
        <taxon>Eukaryota</taxon>
        <taxon>Metazoa</taxon>
        <taxon>Ecdysozoa</taxon>
        <taxon>Arthropoda</taxon>
        <taxon>Hexapoda</taxon>
        <taxon>Insecta</taxon>
        <taxon>Pterygota</taxon>
        <taxon>Neoptera</taxon>
        <taxon>Endopterygota</taxon>
        <taxon>Diptera</taxon>
        <taxon>Nematocera</taxon>
        <taxon>Culicoidea</taxon>
        <taxon>Culicidae</taxon>
        <taxon>Anophelinae</taxon>
        <taxon>Anopheles</taxon>
    </lineage>
</organism>
<proteinExistence type="evidence at protein level"/>
<reference key="1">
    <citation type="journal article" date="2001" name="Eur. J. Biochem.">
        <title>Blood digestion in the malaria mosquito Anopheles gambiae: molecular cloning and biochemical characterization of two inducible chymotrypsins.</title>
        <authorList>
            <person name="Vizioli J."/>
            <person name="Catteruccia F."/>
            <person name="della Torre A."/>
            <person name="Reckmann I."/>
            <person name="Mueller H.M."/>
        </authorList>
    </citation>
    <scope>NUCLEOTIDE SEQUENCE [GENOMIC DNA / MRNA]</scope>
    <scope>PROTEIN SEQUENCE OF 33-42</scope>
    <scope>SUBCELLULAR LOCATION</scope>
    <scope>TISSUE SPECIFICITY</scope>
    <source>
        <strain>Suakoko</strain>
        <tissue>Midgut</tissue>
    </source>
</reference>
<reference key="2">
    <citation type="journal article" date="2002" name="Science">
        <title>The genome sequence of the malaria mosquito Anopheles gambiae.</title>
        <authorList>
            <person name="Holt R.A."/>
            <person name="Subramanian G.M."/>
            <person name="Halpern A."/>
            <person name="Sutton G.G."/>
            <person name="Charlab R."/>
            <person name="Nusskern D.R."/>
            <person name="Wincker P."/>
            <person name="Clark A.G."/>
            <person name="Ribeiro J.M.C."/>
            <person name="Wides R."/>
            <person name="Salzberg S.L."/>
            <person name="Loftus B.J."/>
            <person name="Yandell M.D."/>
            <person name="Majoros W.H."/>
            <person name="Rusch D.B."/>
            <person name="Lai Z."/>
            <person name="Kraft C.L."/>
            <person name="Abril J.F."/>
            <person name="Anthouard V."/>
            <person name="Arensburger P."/>
            <person name="Atkinson P.W."/>
            <person name="Baden H."/>
            <person name="de Berardinis V."/>
            <person name="Baldwin D."/>
            <person name="Benes V."/>
            <person name="Biedler J."/>
            <person name="Blass C."/>
            <person name="Bolanos R."/>
            <person name="Boscus D."/>
            <person name="Barnstead M."/>
            <person name="Cai S."/>
            <person name="Center A."/>
            <person name="Chaturverdi K."/>
            <person name="Christophides G.K."/>
            <person name="Chrystal M.A.M."/>
            <person name="Clamp M."/>
            <person name="Cravchik A."/>
            <person name="Curwen V."/>
            <person name="Dana A."/>
            <person name="Delcher A."/>
            <person name="Dew I."/>
            <person name="Evans C.A."/>
            <person name="Flanigan M."/>
            <person name="Grundschober-Freimoser A."/>
            <person name="Friedli L."/>
            <person name="Gu Z."/>
            <person name="Guan P."/>
            <person name="Guigo R."/>
            <person name="Hillenmeyer M.E."/>
            <person name="Hladun S.L."/>
            <person name="Hogan J.R."/>
            <person name="Hong Y.S."/>
            <person name="Hoover J."/>
            <person name="Jaillon O."/>
            <person name="Ke Z."/>
            <person name="Kodira C.D."/>
            <person name="Kokoza E."/>
            <person name="Koutsos A."/>
            <person name="Letunic I."/>
            <person name="Levitsky A.A."/>
            <person name="Liang Y."/>
            <person name="Lin J.-J."/>
            <person name="Lobo N.F."/>
            <person name="Lopez J.R."/>
            <person name="Malek J.A."/>
            <person name="McIntosh T.C."/>
            <person name="Meister S."/>
            <person name="Miller J.R."/>
            <person name="Mobarry C."/>
            <person name="Mongin E."/>
            <person name="Murphy S.D."/>
            <person name="O'Brochta D.A."/>
            <person name="Pfannkoch C."/>
            <person name="Qi R."/>
            <person name="Regier M.A."/>
            <person name="Remington K."/>
            <person name="Shao H."/>
            <person name="Sharakhova M.V."/>
            <person name="Sitter C.D."/>
            <person name="Shetty J."/>
            <person name="Smith T.J."/>
            <person name="Strong R."/>
            <person name="Sun J."/>
            <person name="Thomasova D."/>
            <person name="Ton L.Q."/>
            <person name="Topalis P."/>
            <person name="Tu Z.J."/>
            <person name="Unger M.F."/>
            <person name="Walenz B."/>
            <person name="Wang A.H."/>
            <person name="Wang J."/>
            <person name="Wang M."/>
            <person name="Wang X."/>
            <person name="Woodford K.J."/>
            <person name="Wortman J.R."/>
            <person name="Wu M."/>
            <person name="Yao A."/>
            <person name="Zdobnov E.M."/>
            <person name="Zhang H."/>
            <person name="Zhao Q."/>
            <person name="Zhao S."/>
            <person name="Zhu S.C."/>
            <person name="Zhimulev I."/>
            <person name="Coluzzi M."/>
            <person name="della Torre A."/>
            <person name="Roth C.W."/>
            <person name="Louis C."/>
            <person name="Kalush F."/>
            <person name="Mural R.J."/>
            <person name="Myers E.W."/>
            <person name="Adams M.D."/>
            <person name="Smith H.O."/>
            <person name="Broder S."/>
            <person name="Gardner M.J."/>
            <person name="Fraser C.M."/>
            <person name="Birney E."/>
            <person name="Bork P."/>
            <person name="Brey P.T."/>
            <person name="Venter J.C."/>
            <person name="Weissenbach J."/>
            <person name="Kafatos F.C."/>
            <person name="Collins F.H."/>
            <person name="Hoffman S.L."/>
        </authorList>
    </citation>
    <scope>NUCLEOTIDE SEQUENCE [LARGE SCALE GENOMIC DNA]</scope>
    <source>
        <strain>PEST</strain>
    </source>
</reference>
<evidence type="ECO:0000250" key="1"/>
<evidence type="ECO:0000255" key="2"/>
<evidence type="ECO:0000255" key="3">
    <source>
        <dbReference type="PROSITE-ProRule" id="PRU00274"/>
    </source>
</evidence>
<evidence type="ECO:0000255" key="4">
    <source>
        <dbReference type="PROSITE-ProRule" id="PRU10078"/>
    </source>
</evidence>
<evidence type="ECO:0000255" key="5">
    <source>
        <dbReference type="PROSITE-ProRule" id="PRU10079"/>
    </source>
</evidence>
<evidence type="ECO:0000269" key="6">
    <source>
    </source>
</evidence>
<evidence type="ECO:0000305" key="7"/>